<keyword id="KW-1185">Reference proteome</keyword>
<accession>B2VDJ2</accession>
<proteinExistence type="inferred from homology"/>
<comment type="similarity">
    <text evidence="1">Belongs to the UPF0502 family.</text>
</comment>
<feature type="chain" id="PRO_0000382557" description="UPF0502 protein ETA_20480">
    <location>
        <begin position="1"/>
        <end position="217"/>
    </location>
</feature>
<feature type="region of interest" description="Disordered" evidence="2">
    <location>
        <begin position="169"/>
        <end position="188"/>
    </location>
</feature>
<feature type="compositionally biased region" description="Basic and acidic residues" evidence="2">
    <location>
        <begin position="173"/>
        <end position="188"/>
    </location>
</feature>
<reference key="1">
    <citation type="journal article" date="2008" name="Environ. Microbiol.">
        <title>The genome of Erwinia tasmaniensis strain Et1/99, a non-pathogenic bacterium in the genus Erwinia.</title>
        <authorList>
            <person name="Kube M."/>
            <person name="Migdoll A.M."/>
            <person name="Mueller I."/>
            <person name="Kuhl H."/>
            <person name="Beck A."/>
            <person name="Reinhardt R."/>
            <person name="Geider K."/>
        </authorList>
    </citation>
    <scope>NUCLEOTIDE SEQUENCE [LARGE SCALE GENOMIC DNA]</scope>
    <source>
        <strain>DSM 17950 / CFBP 7177 / CIP 109463 / NCPPB 4357 / Et1/99</strain>
    </source>
</reference>
<protein>
    <recommendedName>
        <fullName evidence="1">UPF0502 protein ETA_20480</fullName>
    </recommendedName>
</protein>
<gene>
    <name type="ordered locus">ETA_20480</name>
</gene>
<name>Y2048_ERWT9</name>
<sequence length="217" mass="24338">MNKILFTAVEARVVGCLLEKQVTTPDQYPMSLNGVVTACNQKSNREPVMSLTDSEVQNTLDMLVKKHQLTALNTGSRVVKYEQRFCNSTFGQMKLSAAEVAIIANLLLRGAQTPGELRIRCARIHDFADMTEVEQTLERLAQHEHGQLVVRLAREPGKRESRYMHLLSGEVDESSRADGHHPDDHRGDLEGRIAQLEQQVATLQRQIAQLLNNGEVK</sequence>
<evidence type="ECO:0000255" key="1">
    <source>
        <dbReference type="HAMAP-Rule" id="MF_01584"/>
    </source>
</evidence>
<evidence type="ECO:0000256" key="2">
    <source>
        <dbReference type="SAM" id="MobiDB-lite"/>
    </source>
</evidence>
<organism>
    <name type="scientific">Erwinia tasmaniensis (strain DSM 17950 / CFBP 7177 / CIP 109463 / NCPPB 4357 / Et1/99)</name>
    <dbReference type="NCBI Taxonomy" id="465817"/>
    <lineage>
        <taxon>Bacteria</taxon>
        <taxon>Pseudomonadati</taxon>
        <taxon>Pseudomonadota</taxon>
        <taxon>Gammaproteobacteria</taxon>
        <taxon>Enterobacterales</taxon>
        <taxon>Erwiniaceae</taxon>
        <taxon>Erwinia</taxon>
    </lineage>
</organism>
<dbReference type="EMBL" id="CU468135">
    <property type="protein sequence ID" value="CAO97094.1"/>
    <property type="molecule type" value="Genomic_DNA"/>
</dbReference>
<dbReference type="RefSeq" id="WP_012441768.1">
    <property type="nucleotide sequence ID" value="NC_010694.1"/>
</dbReference>
<dbReference type="SMR" id="B2VDJ2"/>
<dbReference type="STRING" id="465817.ETA_20480"/>
<dbReference type="KEGG" id="eta:ETA_20480"/>
<dbReference type="eggNOG" id="COG3132">
    <property type="taxonomic scope" value="Bacteria"/>
</dbReference>
<dbReference type="HOGENOM" id="CLU_057831_2_0_6"/>
<dbReference type="OrthoDB" id="9784785at2"/>
<dbReference type="Proteomes" id="UP000001726">
    <property type="component" value="Chromosome"/>
</dbReference>
<dbReference type="Gene3D" id="1.10.10.10">
    <property type="entry name" value="Winged helix-like DNA-binding domain superfamily/Winged helix DNA-binding domain"/>
    <property type="match status" value="2"/>
</dbReference>
<dbReference type="HAMAP" id="MF_01584">
    <property type="entry name" value="UPF0502"/>
    <property type="match status" value="1"/>
</dbReference>
<dbReference type="InterPro" id="IPR007432">
    <property type="entry name" value="DUF480"/>
</dbReference>
<dbReference type="InterPro" id="IPR036388">
    <property type="entry name" value="WH-like_DNA-bd_sf"/>
</dbReference>
<dbReference type="InterPro" id="IPR036390">
    <property type="entry name" value="WH_DNA-bd_sf"/>
</dbReference>
<dbReference type="NCBIfam" id="NF008413">
    <property type="entry name" value="PRK11239.1"/>
    <property type="match status" value="1"/>
</dbReference>
<dbReference type="PANTHER" id="PTHR38768">
    <property type="entry name" value="UPF0502 PROTEIN YCEH"/>
    <property type="match status" value="1"/>
</dbReference>
<dbReference type="PANTHER" id="PTHR38768:SF1">
    <property type="entry name" value="UPF0502 PROTEIN YCEH"/>
    <property type="match status" value="1"/>
</dbReference>
<dbReference type="Pfam" id="PF04337">
    <property type="entry name" value="DUF480"/>
    <property type="match status" value="1"/>
</dbReference>
<dbReference type="SUPFAM" id="SSF46785">
    <property type="entry name" value="Winged helix' DNA-binding domain"/>
    <property type="match status" value="2"/>
</dbReference>